<gene>
    <name evidence="1" type="primary">lrgB</name>
    <name type="ordered locus">SAV0263</name>
</gene>
<protein>
    <recommendedName>
        <fullName evidence="1">Antiholin-like protein LrgB</fullName>
    </recommendedName>
</protein>
<comment type="function">
    <text evidence="1">Inhibits the expression or activity of extracellular murein hydrolases by interacting, possibly with LrgA, with the holin-like proteins CidA and/or CidB. The LrgAB and CidAB proteins may affect the proton motive force of the membrane. May be involved in programmed cell death (PCD), possibly triggering PCD in response to antibiotics and environmental stresses.</text>
</comment>
<comment type="subcellular location">
    <subcellularLocation>
        <location evidence="1">Cell membrane</location>
        <topology evidence="1">Multi-pass membrane protein</topology>
    </subcellularLocation>
</comment>
<comment type="similarity">
    <text evidence="1">Belongs to the CidB/LrgB family. LrgB subfamily.</text>
</comment>
<dbReference type="EMBL" id="BA000017">
    <property type="protein sequence ID" value="BAB56425.1"/>
    <property type="molecule type" value="Genomic_DNA"/>
</dbReference>
<dbReference type="RefSeq" id="WP_000607067.1">
    <property type="nucleotide sequence ID" value="NC_002758.2"/>
</dbReference>
<dbReference type="KEGG" id="sav:SAV0263"/>
<dbReference type="HOGENOM" id="CLU_082099_1_0_9"/>
<dbReference type="PhylomeDB" id="P60641"/>
<dbReference type="Proteomes" id="UP000002481">
    <property type="component" value="Chromosome"/>
</dbReference>
<dbReference type="GO" id="GO:0005886">
    <property type="term" value="C:plasma membrane"/>
    <property type="evidence" value="ECO:0007669"/>
    <property type="project" value="UniProtKB-SubCell"/>
</dbReference>
<dbReference type="GO" id="GO:0019835">
    <property type="term" value="P:cytolysis"/>
    <property type="evidence" value="ECO:0007669"/>
    <property type="project" value="UniProtKB-UniRule"/>
</dbReference>
<dbReference type="GO" id="GO:0031640">
    <property type="term" value="P:killing of cells of another organism"/>
    <property type="evidence" value="ECO:0007669"/>
    <property type="project" value="UniProtKB-KW"/>
</dbReference>
<dbReference type="GO" id="GO:0012501">
    <property type="term" value="P:programmed cell death"/>
    <property type="evidence" value="ECO:0007669"/>
    <property type="project" value="UniProtKB-UniRule"/>
</dbReference>
<dbReference type="HAMAP" id="MF_01142">
    <property type="entry name" value="LrgB"/>
    <property type="match status" value="1"/>
</dbReference>
<dbReference type="InterPro" id="IPR024891">
    <property type="entry name" value="Antiholin-like_LrgB"/>
</dbReference>
<dbReference type="InterPro" id="IPR007300">
    <property type="entry name" value="CidB/LrgB"/>
</dbReference>
<dbReference type="NCBIfam" id="NF003291">
    <property type="entry name" value="PRK04288.1"/>
    <property type="match status" value="1"/>
</dbReference>
<dbReference type="PANTHER" id="PTHR30249:SF0">
    <property type="entry name" value="PLASTIDAL GLYCOLATE_GLYCERATE TRANSLOCATOR 1, CHLOROPLASTIC"/>
    <property type="match status" value="1"/>
</dbReference>
<dbReference type="PANTHER" id="PTHR30249">
    <property type="entry name" value="PUTATIVE SEROTONIN TRANSPORTER"/>
    <property type="match status" value="1"/>
</dbReference>
<dbReference type="Pfam" id="PF04172">
    <property type="entry name" value="LrgB"/>
    <property type="match status" value="1"/>
</dbReference>
<keyword id="KW-1003">Cell membrane</keyword>
<keyword id="KW-0204">Cytolysis</keyword>
<keyword id="KW-0472">Membrane</keyword>
<keyword id="KW-0812">Transmembrane</keyword>
<keyword id="KW-1133">Transmembrane helix</keyword>
<sequence length="233" mass="25097">MINHLALNTPYFGILLSVIPFFLATILFEKTNRFFLFAPLFVSMVFGVAFLYLTGIPYKTYKIGGDIIYFFLEPATICFAIPLYKKREVLVKHWHRIIGGIGIGTVVALLIILTFAKLAQFANDVILSMLPQAATTAIALPVSAGIGGIKELTSLAVILNGVIIYALGNKFLKLFRITNPIARGLALGTSGHTLGVAPAKELGPVEESMASIALVLVGVVVVAVVPVFVAIFF</sequence>
<evidence type="ECO:0000255" key="1">
    <source>
        <dbReference type="HAMAP-Rule" id="MF_01142"/>
    </source>
</evidence>
<proteinExistence type="inferred from homology"/>
<organism>
    <name type="scientific">Staphylococcus aureus (strain Mu50 / ATCC 700699)</name>
    <dbReference type="NCBI Taxonomy" id="158878"/>
    <lineage>
        <taxon>Bacteria</taxon>
        <taxon>Bacillati</taxon>
        <taxon>Bacillota</taxon>
        <taxon>Bacilli</taxon>
        <taxon>Bacillales</taxon>
        <taxon>Staphylococcaceae</taxon>
        <taxon>Staphylococcus</taxon>
    </lineage>
</organism>
<accession>P60641</accession>
<accession>P72359</accession>
<name>LRGB_STAAM</name>
<feature type="chain" id="PRO_0000217057" description="Antiholin-like protein LrgB">
    <location>
        <begin position="1"/>
        <end position="233"/>
    </location>
</feature>
<feature type="transmembrane region" description="Helical" evidence="1">
    <location>
        <begin position="5"/>
        <end position="27"/>
    </location>
</feature>
<feature type="transmembrane region" description="Helical" evidence="1">
    <location>
        <begin position="34"/>
        <end position="56"/>
    </location>
</feature>
<feature type="transmembrane region" description="Helical" evidence="1">
    <location>
        <begin position="67"/>
        <end position="84"/>
    </location>
</feature>
<feature type="transmembrane region" description="Helical" evidence="1">
    <location>
        <begin position="97"/>
        <end position="116"/>
    </location>
</feature>
<feature type="transmembrane region" description="Helical" evidence="1">
    <location>
        <begin position="126"/>
        <end position="148"/>
    </location>
</feature>
<feature type="transmembrane region" description="Helical" evidence="1">
    <location>
        <begin position="155"/>
        <end position="177"/>
    </location>
</feature>
<feature type="transmembrane region" description="Helical" evidence="1">
    <location>
        <begin position="210"/>
        <end position="232"/>
    </location>
</feature>
<reference key="1">
    <citation type="journal article" date="2001" name="Lancet">
        <title>Whole genome sequencing of meticillin-resistant Staphylococcus aureus.</title>
        <authorList>
            <person name="Kuroda M."/>
            <person name="Ohta T."/>
            <person name="Uchiyama I."/>
            <person name="Baba T."/>
            <person name="Yuzawa H."/>
            <person name="Kobayashi I."/>
            <person name="Cui L."/>
            <person name="Oguchi A."/>
            <person name="Aoki K."/>
            <person name="Nagai Y."/>
            <person name="Lian J.-Q."/>
            <person name="Ito T."/>
            <person name="Kanamori M."/>
            <person name="Matsumaru H."/>
            <person name="Maruyama A."/>
            <person name="Murakami H."/>
            <person name="Hosoyama A."/>
            <person name="Mizutani-Ui Y."/>
            <person name="Takahashi N.K."/>
            <person name="Sawano T."/>
            <person name="Inoue R."/>
            <person name="Kaito C."/>
            <person name="Sekimizu K."/>
            <person name="Hirakawa H."/>
            <person name="Kuhara S."/>
            <person name="Goto S."/>
            <person name="Yabuzaki J."/>
            <person name="Kanehisa M."/>
            <person name="Yamashita A."/>
            <person name="Oshima K."/>
            <person name="Furuya K."/>
            <person name="Yoshino C."/>
            <person name="Shiba T."/>
            <person name="Hattori M."/>
            <person name="Ogasawara N."/>
            <person name="Hayashi H."/>
            <person name="Hiramatsu K."/>
        </authorList>
    </citation>
    <scope>NUCLEOTIDE SEQUENCE [LARGE SCALE GENOMIC DNA]</scope>
    <source>
        <strain>Mu50 / ATCC 700699</strain>
    </source>
</reference>